<comment type="function">
    <text evidence="1">Plays a central role in 2-thiolation of mcm(5)S(2)U at tRNA wobble positions of tRNA(Lys), tRNA(Glu) and tRNA(Gln). May act by forming a heterodimer with NCS6 that ligates sulfur from thiocarboxylated URM1 onto the uridine of tRNAs at wobble position. Prior mcm(5) tRNA modification by the elongator complex is required for 2-thiolation. May also be involved in protein urmylation.</text>
</comment>
<comment type="pathway">
    <text evidence="1">tRNA modification; 5-methoxycarbonylmethyl-2-thiouridine-tRNA biosynthesis.</text>
</comment>
<comment type="subcellular location">
    <subcellularLocation>
        <location evidence="1">Cytoplasm</location>
    </subcellularLocation>
</comment>
<comment type="similarity">
    <text evidence="1">Belongs to the CTU2/NCS2 family.</text>
</comment>
<protein>
    <recommendedName>
        <fullName evidence="1">Cytoplasmic tRNA 2-thiolation protein 2</fullName>
    </recommendedName>
</protein>
<sequence length="448" mass="50980">MSENNPVKYLADSDTECQRCKAVPAVLITRKEAFCKNCFIRFIRGKQRKSMIDERYKVKYGAVQEKIGQQKVLLALSGGVSSLVLTDVVASLLQEQIESHKGRMGFELVLLNIDEFELESLNKRIEEILPILVERYAPVNIQYKVLSIESFLIDRAMIQKVLLNKDFTAIAQRLSDEQNKYTVADMLKLCPNKSSMEDLLTVIYEELILRTAFIENCETIIYGHSMTRIANEILALTVRGRGSSVYKAIADHTVQFMDKEFTILFPLRDVLFAEIIAYADLIELNKLEVKSTIVKSKITKNLTIRDLTTNYFSHLDATGYASTASTVVKTGEKLGAPQFKHSYGRCQICGVEIYQDPKEWLRRITVNDAAPIETEEEQEYVNLYKEALSSSETLDTENTHPVNICYGCIVTLSGAKQDTAFVWPLKDKDTNHEDKKVLDEYILTDDEE</sequence>
<organism>
    <name type="scientific">Scheffersomyces stipitis (strain ATCC 58785 / CBS 6054 / NBRC 10063 / NRRL Y-11545)</name>
    <name type="common">Yeast</name>
    <name type="synonym">Pichia stipitis</name>
    <dbReference type="NCBI Taxonomy" id="322104"/>
    <lineage>
        <taxon>Eukaryota</taxon>
        <taxon>Fungi</taxon>
        <taxon>Dikarya</taxon>
        <taxon>Ascomycota</taxon>
        <taxon>Saccharomycotina</taxon>
        <taxon>Pichiomycetes</taxon>
        <taxon>Debaryomycetaceae</taxon>
        <taxon>Scheffersomyces</taxon>
    </lineage>
</organism>
<feature type="chain" id="PRO_0000369301" description="Cytoplasmic tRNA 2-thiolation protein 2">
    <location>
        <begin position="1"/>
        <end position="448"/>
    </location>
</feature>
<gene>
    <name evidence="1" type="primary">NCS2</name>
    <name evidence="1" type="synonym">CTU2</name>
    <name type="ORF">PICST_50402</name>
</gene>
<dbReference type="EMBL" id="CP000502">
    <property type="protein sequence ID" value="ABN68699.2"/>
    <property type="molecule type" value="Genomic_DNA"/>
</dbReference>
<dbReference type="RefSeq" id="XP_001386728.2">
    <property type="nucleotide sequence ID" value="XM_001386691.1"/>
</dbReference>
<dbReference type="FunCoup" id="A3M0F4">
    <property type="interactions" value="193"/>
</dbReference>
<dbReference type="STRING" id="322104.A3M0F4"/>
<dbReference type="GeneID" id="4840963"/>
<dbReference type="KEGG" id="pic:PICST_50402"/>
<dbReference type="eggNOG" id="KOG2594">
    <property type="taxonomic scope" value="Eukaryota"/>
</dbReference>
<dbReference type="HOGENOM" id="CLU_024534_1_0_1"/>
<dbReference type="InParanoid" id="A3M0F4"/>
<dbReference type="OMA" id="KQRKQMM"/>
<dbReference type="OrthoDB" id="25129at2759"/>
<dbReference type="UniPathway" id="UPA00988"/>
<dbReference type="Proteomes" id="UP000002258">
    <property type="component" value="Chromosome 8"/>
</dbReference>
<dbReference type="GO" id="GO:0005829">
    <property type="term" value="C:cytosol"/>
    <property type="evidence" value="ECO:0000250"/>
    <property type="project" value="UniProtKB"/>
</dbReference>
<dbReference type="GO" id="GO:0016779">
    <property type="term" value="F:nucleotidyltransferase activity"/>
    <property type="evidence" value="ECO:0007669"/>
    <property type="project" value="UniProtKB-UniRule"/>
</dbReference>
<dbReference type="GO" id="GO:0016783">
    <property type="term" value="F:sulfurtransferase activity"/>
    <property type="evidence" value="ECO:0007669"/>
    <property type="project" value="TreeGrafter"/>
</dbReference>
<dbReference type="GO" id="GO:0000049">
    <property type="term" value="F:tRNA binding"/>
    <property type="evidence" value="ECO:0007669"/>
    <property type="project" value="InterPro"/>
</dbReference>
<dbReference type="GO" id="GO:0001403">
    <property type="term" value="P:invasive growth in response to glucose limitation"/>
    <property type="evidence" value="ECO:0007669"/>
    <property type="project" value="EnsemblFungi"/>
</dbReference>
<dbReference type="GO" id="GO:0032447">
    <property type="term" value="P:protein urmylation"/>
    <property type="evidence" value="ECO:0007669"/>
    <property type="project" value="UniProtKB-UniRule"/>
</dbReference>
<dbReference type="GO" id="GO:0007124">
    <property type="term" value="P:pseudohyphal growth"/>
    <property type="evidence" value="ECO:0007669"/>
    <property type="project" value="EnsemblFungi"/>
</dbReference>
<dbReference type="GO" id="GO:0034227">
    <property type="term" value="P:tRNA thio-modification"/>
    <property type="evidence" value="ECO:0000250"/>
    <property type="project" value="UniProtKB"/>
</dbReference>
<dbReference type="GO" id="GO:0002143">
    <property type="term" value="P:tRNA wobble position uridine thiolation"/>
    <property type="evidence" value="ECO:0007669"/>
    <property type="project" value="EnsemblFungi"/>
</dbReference>
<dbReference type="GO" id="GO:0002098">
    <property type="term" value="P:tRNA wobble uridine modification"/>
    <property type="evidence" value="ECO:0000250"/>
    <property type="project" value="UniProtKB"/>
</dbReference>
<dbReference type="FunFam" id="3.40.50.620:FF:000366">
    <property type="entry name" value="Cytoplasmic tRNA 2-thiolation protein 2"/>
    <property type="match status" value="1"/>
</dbReference>
<dbReference type="Gene3D" id="3.40.50.620">
    <property type="entry name" value="HUPs"/>
    <property type="match status" value="1"/>
</dbReference>
<dbReference type="HAMAP" id="MF_03054">
    <property type="entry name" value="CTU2"/>
    <property type="match status" value="1"/>
</dbReference>
<dbReference type="InterPro" id="IPR019407">
    <property type="entry name" value="CTU2"/>
</dbReference>
<dbReference type="InterPro" id="IPR014729">
    <property type="entry name" value="Rossmann-like_a/b/a_fold"/>
</dbReference>
<dbReference type="PANTHER" id="PTHR20882">
    <property type="entry name" value="CYTOPLASMIC TRNA 2-THIOLATION PROTEIN 2"/>
    <property type="match status" value="1"/>
</dbReference>
<dbReference type="PANTHER" id="PTHR20882:SF14">
    <property type="entry name" value="CYTOPLASMIC TRNA 2-THIOLATION PROTEIN 2"/>
    <property type="match status" value="1"/>
</dbReference>
<dbReference type="Pfam" id="PF10288">
    <property type="entry name" value="CTU2"/>
    <property type="match status" value="1"/>
</dbReference>
<dbReference type="SUPFAM" id="SSF52402">
    <property type="entry name" value="Adenine nucleotide alpha hydrolases-like"/>
    <property type="match status" value="1"/>
</dbReference>
<accession>A3M0F4</accession>
<keyword id="KW-0963">Cytoplasm</keyword>
<keyword id="KW-1185">Reference proteome</keyword>
<keyword id="KW-0819">tRNA processing</keyword>
<evidence type="ECO:0000255" key="1">
    <source>
        <dbReference type="HAMAP-Rule" id="MF_03054"/>
    </source>
</evidence>
<name>CTU2_PICST</name>
<proteinExistence type="inferred from homology"/>
<reference key="1">
    <citation type="journal article" date="2007" name="Nat. Biotechnol.">
        <title>Genome sequence of the lignocellulose-bioconverting and xylose-fermenting yeast Pichia stipitis.</title>
        <authorList>
            <person name="Jeffries T.W."/>
            <person name="Grigoriev I.V."/>
            <person name="Grimwood J."/>
            <person name="Laplaza J.M."/>
            <person name="Aerts A."/>
            <person name="Salamov A."/>
            <person name="Schmutz J."/>
            <person name="Lindquist E."/>
            <person name="Dehal P."/>
            <person name="Shapiro H."/>
            <person name="Jin Y.-S."/>
            <person name="Passoth V."/>
            <person name="Richardson P.M."/>
        </authorList>
    </citation>
    <scope>NUCLEOTIDE SEQUENCE [LARGE SCALE GENOMIC DNA]</scope>
    <source>
        <strain>ATCC 58785 / CBS 6054 / NBRC 10063 / NRRL Y-11545</strain>
    </source>
</reference>